<keyword id="KW-0694">RNA-binding</keyword>
<keyword id="KW-0346">Stress response</keyword>
<evidence type="ECO:0000255" key="1">
    <source>
        <dbReference type="HAMAP-Rule" id="MF_00436"/>
    </source>
</evidence>
<evidence type="ECO:0000255" key="2">
    <source>
        <dbReference type="PROSITE-ProRule" id="PRU01346"/>
    </source>
</evidence>
<evidence type="ECO:0000256" key="3">
    <source>
        <dbReference type="SAM" id="MobiDB-lite"/>
    </source>
</evidence>
<name>HFQ_YERPY</name>
<reference key="1">
    <citation type="submission" date="2008-02" db="EMBL/GenBank/DDBJ databases">
        <title>Complete sequence of Yersinia pseudotuberculosis YPIII.</title>
        <authorList>
            <consortium name="US DOE Joint Genome Institute"/>
            <person name="Copeland A."/>
            <person name="Lucas S."/>
            <person name="Lapidus A."/>
            <person name="Glavina del Rio T."/>
            <person name="Dalin E."/>
            <person name="Tice H."/>
            <person name="Bruce D."/>
            <person name="Goodwin L."/>
            <person name="Pitluck S."/>
            <person name="Munk A.C."/>
            <person name="Brettin T."/>
            <person name="Detter J.C."/>
            <person name="Han C."/>
            <person name="Tapia R."/>
            <person name="Schmutz J."/>
            <person name="Larimer F."/>
            <person name="Land M."/>
            <person name="Hauser L."/>
            <person name="Challacombe J.F."/>
            <person name="Green L."/>
            <person name="Lindler L.E."/>
            <person name="Nikolich M.P."/>
            <person name="Richardson P."/>
        </authorList>
    </citation>
    <scope>NUCLEOTIDE SEQUENCE [LARGE SCALE GENOMIC DNA]</scope>
    <source>
        <strain>YPIII</strain>
    </source>
</reference>
<protein>
    <recommendedName>
        <fullName evidence="1">RNA-binding protein Hfq</fullName>
    </recommendedName>
</protein>
<feature type="chain" id="PRO_1000124436" description="RNA-binding protein Hfq">
    <location>
        <begin position="1"/>
        <end position="101"/>
    </location>
</feature>
<feature type="domain" description="Sm" evidence="2">
    <location>
        <begin position="9"/>
        <end position="68"/>
    </location>
</feature>
<feature type="region of interest" description="Disordered" evidence="3">
    <location>
        <begin position="63"/>
        <end position="101"/>
    </location>
</feature>
<feature type="compositionally biased region" description="Polar residues" evidence="3">
    <location>
        <begin position="70"/>
        <end position="86"/>
    </location>
</feature>
<gene>
    <name evidence="1" type="primary">hfq</name>
    <name type="ordered locus">YPK_3799</name>
</gene>
<sequence length="101" mass="11130">MAKGQSLQDPFLNALRRERVPVSIYLVNGIKLQGQVESFDQFVILLKNTVSQMVYKHAISTVVPSRPVSHHSNTPSGSTNNYHGSNPSAPQQPQQDSDDAE</sequence>
<proteinExistence type="inferred from homology"/>
<dbReference type="EMBL" id="CP000950">
    <property type="protein sequence ID" value="ACA70066.1"/>
    <property type="molecule type" value="Genomic_DNA"/>
</dbReference>
<dbReference type="RefSeq" id="WP_002209151.1">
    <property type="nucleotide sequence ID" value="NZ_CP009792.1"/>
</dbReference>
<dbReference type="SMR" id="B1JMN9"/>
<dbReference type="GeneID" id="58049160"/>
<dbReference type="KEGG" id="ypy:YPK_3799"/>
<dbReference type="PATRIC" id="fig|502800.11.peg.147"/>
<dbReference type="GO" id="GO:0005829">
    <property type="term" value="C:cytosol"/>
    <property type="evidence" value="ECO:0007669"/>
    <property type="project" value="TreeGrafter"/>
</dbReference>
<dbReference type="GO" id="GO:0003723">
    <property type="term" value="F:RNA binding"/>
    <property type="evidence" value="ECO:0007669"/>
    <property type="project" value="UniProtKB-UniRule"/>
</dbReference>
<dbReference type="GO" id="GO:0006355">
    <property type="term" value="P:regulation of DNA-templated transcription"/>
    <property type="evidence" value="ECO:0007669"/>
    <property type="project" value="InterPro"/>
</dbReference>
<dbReference type="GO" id="GO:0043487">
    <property type="term" value="P:regulation of RNA stability"/>
    <property type="evidence" value="ECO:0007669"/>
    <property type="project" value="TreeGrafter"/>
</dbReference>
<dbReference type="GO" id="GO:0045974">
    <property type="term" value="P:regulation of translation, ncRNA-mediated"/>
    <property type="evidence" value="ECO:0007669"/>
    <property type="project" value="TreeGrafter"/>
</dbReference>
<dbReference type="CDD" id="cd01716">
    <property type="entry name" value="Hfq"/>
    <property type="match status" value="1"/>
</dbReference>
<dbReference type="FunFam" id="2.30.30.100:FF:000001">
    <property type="entry name" value="RNA-binding protein Hfq"/>
    <property type="match status" value="1"/>
</dbReference>
<dbReference type="Gene3D" id="2.30.30.100">
    <property type="match status" value="1"/>
</dbReference>
<dbReference type="HAMAP" id="MF_00436">
    <property type="entry name" value="Hfq"/>
    <property type="match status" value="1"/>
</dbReference>
<dbReference type="InterPro" id="IPR005001">
    <property type="entry name" value="Hfq"/>
</dbReference>
<dbReference type="InterPro" id="IPR010920">
    <property type="entry name" value="LSM_dom_sf"/>
</dbReference>
<dbReference type="InterPro" id="IPR047575">
    <property type="entry name" value="Sm"/>
</dbReference>
<dbReference type="NCBIfam" id="TIGR02383">
    <property type="entry name" value="Hfq"/>
    <property type="match status" value="1"/>
</dbReference>
<dbReference type="NCBIfam" id="NF001602">
    <property type="entry name" value="PRK00395.1"/>
    <property type="match status" value="1"/>
</dbReference>
<dbReference type="PANTHER" id="PTHR34772">
    <property type="entry name" value="RNA-BINDING PROTEIN HFQ"/>
    <property type="match status" value="1"/>
</dbReference>
<dbReference type="PANTHER" id="PTHR34772:SF1">
    <property type="entry name" value="RNA-BINDING PROTEIN HFQ"/>
    <property type="match status" value="1"/>
</dbReference>
<dbReference type="Pfam" id="PF17209">
    <property type="entry name" value="Hfq"/>
    <property type="match status" value="1"/>
</dbReference>
<dbReference type="SUPFAM" id="SSF50182">
    <property type="entry name" value="Sm-like ribonucleoproteins"/>
    <property type="match status" value="1"/>
</dbReference>
<dbReference type="PROSITE" id="PS52002">
    <property type="entry name" value="SM"/>
    <property type="match status" value="1"/>
</dbReference>
<comment type="function">
    <text evidence="1">RNA chaperone that binds small regulatory RNA (sRNAs) and mRNAs to facilitate mRNA translational regulation in response to envelope stress, environmental stress and changes in metabolite concentrations. Also binds with high specificity to tRNAs.</text>
</comment>
<comment type="subunit">
    <text evidence="1">Homohexamer.</text>
</comment>
<comment type="similarity">
    <text evidence="1">Belongs to the Hfq family.</text>
</comment>
<accession>B1JMN9</accession>
<organism>
    <name type="scientific">Yersinia pseudotuberculosis serotype O:3 (strain YPIII)</name>
    <dbReference type="NCBI Taxonomy" id="502800"/>
    <lineage>
        <taxon>Bacteria</taxon>
        <taxon>Pseudomonadati</taxon>
        <taxon>Pseudomonadota</taxon>
        <taxon>Gammaproteobacteria</taxon>
        <taxon>Enterobacterales</taxon>
        <taxon>Yersiniaceae</taxon>
        <taxon>Yersinia</taxon>
    </lineage>
</organism>